<sequence>MNDLIINHIAELILPRSTDKPLKGKELDELNVVKNGTVVIKDGKIVYAGTHTDDYDATETIDASGKVVSPALVDAHTHLTFGGSREHEMSLKRQGKSYLEILEMGGGILSTVNATRETSEDDLFKKAEHDLLTMIKHGVLAVESKSGYGLDRENELKQLKVSNRLAEKYDLDMKHTFLGPHAVPKEASSNEAFLEEMIALLPEVKQYADFADIFCETGVFTIEQSQHYMQKAKEAGFKVKIHADEIDPLGGLELAIDEQAISADHLVASSDKGKEKLRNSDTVAVLLPATTFYLGKEDYADARGMLDNNGAIALATDYNPGSSVTNNLQLVMAIAALKLKLSPNEVWNAVTVNAAKAIDINAGTINTGDKANLVIWDAPNHEYIPYHFGINHAEKVIKDGKVIVDNTVSFKA</sequence>
<accession>Q5HDM7</accession>
<comment type="function">
    <text evidence="1">Catalyzes the hydrolytic cleavage of the carbon-nitrogen bond in imidazolone-5-propanoate to yield N-formimidoyl-L-glutamate. It is the third step in the universal histidine degradation pathway.</text>
</comment>
<comment type="catalytic activity">
    <reaction evidence="1">
        <text>4-imidazolone-5-propanoate + H2O = N-formimidoyl-L-glutamate</text>
        <dbReference type="Rhea" id="RHEA:23660"/>
        <dbReference type="ChEBI" id="CHEBI:15377"/>
        <dbReference type="ChEBI" id="CHEBI:58928"/>
        <dbReference type="ChEBI" id="CHEBI:77893"/>
        <dbReference type="EC" id="3.5.2.7"/>
    </reaction>
</comment>
<comment type="cofactor">
    <cofactor evidence="1">
        <name>Zn(2+)</name>
        <dbReference type="ChEBI" id="CHEBI:29105"/>
    </cofactor>
    <cofactor evidence="1">
        <name>Fe(3+)</name>
        <dbReference type="ChEBI" id="CHEBI:29034"/>
    </cofactor>
    <text evidence="1">Binds 1 zinc or iron ion per subunit.</text>
</comment>
<comment type="pathway">
    <text evidence="1">Amino-acid degradation; L-histidine degradation into L-glutamate; N-formimidoyl-L-glutamate from L-histidine: step 3/3.</text>
</comment>
<comment type="subcellular location">
    <subcellularLocation>
        <location evidence="1">Cytoplasm</location>
    </subcellularLocation>
</comment>
<comment type="similarity">
    <text evidence="1">Belongs to the metallo-dependent hydrolases superfamily. HutI family.</text>
</comment>
<proteinExistence type="inferred from homology"/>
<dbReference type="EC" id="3.5.2.7" evidence="1"/>
<dbReference type="EMBL" id="CP000046">
    <property type="protein sequence ID" value="AAW37152.1"/>
    <property type="molecule type" value="Genomic_DNA"/>
</dbReference>
<dbReference type="RefSeq" id="WP_000998767.1">
    <property type="nucleotide sequence ID" value="NZ_JBGOFO010000004.1"/>
</dbReference>
<dbReference type="SMR" id="Q5HDM7"/>
<dbReference type="KEGG" id="sac:SACOL2323"/>
<dbReference type="HOGENOM" id="CLU_041647_0_1_9"/>
<dbReference type="UniPathway" id="UPA00379">
    <property type="reaction ID" value="UER00551"/>
</dbReference>
<dbReference type="Proteomes" id="UP000000530">
    <property type="component" value="Chromosome"/>
</dbReference>
<dbReference type="GO" id="GO:0005737">
    <property type="term" value="C:cytoplasm"/>
    <property type="evidence" value="ECO:0007669"/>
    <property type="project" value="UniProtKB-SubCell"/>
</dbReference>
<dbReference type="GO" id="GO:0050480">
    <property type="term" value="F:imidazolonepropionase activity"/>
    <property type="evidence" value="ECO:0007669"/>
    <property type="project" value="UniProtKB-UniRule"/>
</dbReference>
<dbReference type="GO" id="GO:0005506">
    <property type="term" value="F:iron ion binding"/>
    <property type="evidence" value="ECO:0007669"/>
    <property type="project" value="UniProtKB-UniRule"/>
</dbReference>
<dbReference type="GO" id="GO:0008270">
    <property type="term" value="F:zinc ion binding"/>
    <property type="evidence" value="ECO:0007669"/>
    <property type="project" value="UniProtKB-UniRule"/>
</dbReference>
<dbReference type="GO" id="GO:0019556">
    <property type="term" value="P:L-histidine catabolic process to glutamate and formamide"/>
    <property type="evidence" value="ECO:0007669"/>
    <property type="project" value="UniProtKB-UniPathway"/>
</dbReference>
<dbReference type="GO" id="GO:0019557">
    <property type="term" value="P:L-histidine catabolic process to glutamate and formate"/>
    <property type="evidence" value="ECO:0007669"/>
    <property type="project" value="UniProtKB-UniPathway"/>
</dbReference>
<dbReference type="CDD" id="cd01296">
    <property type="entry name" value="Imidazolone-5PH"/>
    <property type="match status" value="1"/>
</dbReference>
<dbReference type="FunFam" id="3.20.20.140:FF:000007">
    <property type="entry name" value="Imidazolonepropionase"/>
    <property type="match status" value="1"/>
</dbReference>
<dbReference type="Gene3D" id="3.20.20.140">
    <property type="entry name" value="Metal-dependent hydrolases"/>
    <property type="match status" value="1"/>
</dbReference>
<dbReference type="Gene3D" id="2.30.40.10">
    <property type="entry name" value="Urease, subunit C, domain 1"/>
    <property type="match status" value="1"/>
</dbReference>
<dbReference type="HAMAP" id="MF_00372">
    <property type="entry name" value="HutI"/>
    <property type="match status" value="1"/>
</dbReference>
<dbReference type="InterPro" id="IPR006680">
    <property type="entry name" value="Amidohydro-rel"/>
</dbReference>
<dbReference type="InterPro" id="IPR005920">
    <property type="entry name" value="HutI"/>
</dbReference>
<dbReference type="InterPro" id="IPR011059">
    <property type="entry name" value="Metal-dep_hydrolase_composite"/>
</dbReference>
<dbReference type="InterPro" id="IPR032466">
    <property type="entry name" value="Metal_Hydrolase"/>
</dbReference>
<dbReference type="NCBIfam" id="TIGR01224">
    <property type="entry name" value="hutI"/>
    <property type="match status" value="1"/>
</dbReference>
<dbReference type="PANTHER" id="PTHR42752">
    <property type="entry name" value="IMIDAZOLONEPROPIONASE"/>
    <property type="match status" value="1"/>
</dbReference>
<dbReference type="PANTHER" id="PTHR42752:SF1">
    <property type="entry name" value="IMIDAZOLONEPROPIONASE-RELATED"/>
    <property type="match status" value="1"/>
</dbReference>
<dbReference type="Pfam" id="PF01979">
    <property type="entry name" value="Amidohydro_1"/>
    <property type="match status" value="1"/>
</dbReference>
<dbReference type="SUPFAM" id="SSF51338">
    <property type="entry name" value="Composite domain of metallo-dependent hydrolases"/>
    <property type="match status" value="1"/>
</dbReference>
<dbReference type="SUPFAM" id="SSF51556">
    <property type="entry name" value="Metallo-dependent hydrolases"/>
    <property type="match status" value="1"/>
</dbReference>
<gene>
    <name evidence="1" type="primary">hutI</name>
    <name type="ordered locus">SACOL2323</name>
</gene>
<reference key="1">
    <citation type="journal article" date="2005" name="J. Bacteriol.">
        <title>Insights on evolution of virulence and resistance from the complete genome analysis of an early methicillin-resistant Staphylococcus aureus strain and a biofilm-producing methicillin-resistant Staphylococcus epidermidis strain.</title>
        <authorList>
            <person name="Gill S.R."/>
            <person name="Fouts D.E."/>
            <person name="Archer G.L."/>
            <person name="Mongodin E.F."/>
            <person name="DeBoy R.T."/>
            <person name="Ravel J."/>
            <person name="Paulsen I.T."/>
            <person name="Kolonay J.F."/>
            <person name="Brinkac L.M."/>
            <person name="Beanan M.J."/>
            <person name="Dodson R.J."/>
            <person name="Daugherty S.C."/>
            <person name="Madupu R."/>
            <person name="Angiuoli S.V."/>
            <person name="Durkin A.S."/>
            <person name="Haft D.H."/>
            <person name="Vamathevan J.J."/>
            <person name="Khouri H."/>
            <person name="Utterback T.R."/>
            <person name="Lee C."/>
            <person name="Dimitrov G."/>
            <person name="Jiang L."/>
            <person name="Qin H."/>
            <person name="Weidman J."/>
            <person name="Tran K."/>
            <person name="Kang K.H."/>
            <person name="Hance I.R."/>
            <person name="Nelson K.E."/>
            <person name="Fraser C.M."/>
        </authorList>
    </citation>
    <scope>NUCLEOTIDE SEQUENCE [LARGE SCALE GENOMIC DNA]</scope>
    <source>
        <strain>COL</strain>
    </source>
</reference>
<organism>
    <name type="scientific">Staphylococcus aureus (strain COL)</name>
    <dbReference type="NCBI Taxonomy" id="93062"/>
    <lineage>
        <taxon>Bacteria</taxon>
        <taxon>Bacillati</taxon>
        <taxon>Bacillota</taxon>
        <taxon>Bacilli</taxon>
        <taxon>Bacillales</taxon>
        <taxon>Staphylococcaceae</taxon>
        <taxon>Staphylococcus</taxon>
    </lineage>
</organism>
<keyword id="KW-0963">Cytoplasm</keyword>
<keyword id="KW-0369">Histidine metabolism</keyword>
<keyword id="KW-0378">Hydrolase</keyword>
<keyword id="KW-0408">Iron</keyword>
<keyword id="KW-0479">Metal-binding</keyword>
<keyword id="KW-0862">Zinc</keyword>
<name>HUTI_STAAC</name>
<evidence type="ECO:0000255" key="1">
    <source>
        <dbReference type="HAMAP-Rule" id="MF_00372"/>
    </source>
</evidence>
<protein>
    <recommendedName>
        <fullName evidence="1">Imidazolonepropionase</fullName>
        <ecNumber evidence="1">3.5.2.7</ecNumber>
    </recommendedName>
    <alternativeName>
        <fullName evidence="1">Imidazolone-5-propionate hydrolase</fullName>
    </alternativeName>
</protein>
<feature type="chain" id="PRO_0000160958" description="Imidazolonepropionase">
    <location>
        <begin position="1"/>
        <end position="412"/>
    </location>
</feature>
<feature type="binding site" evidence="1">
    <location>
        <position position="76"/>
    </location>
    <ligand>
        <name>Fe(3+)</name>
        <dbReference type="ChEBI" id="CHEBI:29034"/>
    </ligand>
</feature>
<feature type="binding site" evidence="1">
    <location>
        <position position="76"/>
    </location>
    <ligand>
        <name>Zn(2+)</name>
        <dbReference type="ChEBI" id="CHEBI:29105"/>
    </ligand>
</feature>
<feature type="binding site" evidence="1">
    <location>
        <position position="78"/>
    </location>
    <ligand>
        <name>Fe(3+)</name>
        <dbReference type="ChEBI" id="CHEBI:29034"/>
    </ligand>
</feature>
<feature type="binding site" evidence="1">
    <location>
        <position position="78"/>
    </location>
    <ligand>
        <name>Zn(2+)</name>
        <dbReference type="ChEBI" id="CHEBI:29105"/>
    </ligand>
</feature>
<feature type="binding site" evidence="1">
    <location>
        <position position="85"/>
    </location>
    <ligand>
        <name>4-imidazolone-5-propanoate</name>
        <dbReference type="ChEBI" id="CHEBI:77893"/>
    </ligand>
</feature>
<feature type="binding site" evidence="1">
    <location>
        <position position="148"/>
    </location>
    <ligand>
        <name>4-imidazolone-5-propanoate</name>
        <dbReference type="ChEBI" id="CHEBI:77893"/>
    </ligand>
</feature>
<feature type="binding site" evidence="1">
    <location>
        <position position="148"/>
    </location>
    <ligand>
        <name>N-formimidoyl-L-glutamate</name>
        <dbReference type="ChEBI" id="CHEBI:58928"/>
    </ligand>
</feature>
<feature type="binding site" evidence="1">
    <location>
        <position position="181"/>
    </location>
    <ligand>
        <name>4-imidazolone-5-propanoate</name>
        <dbReference type="ChEBI" id="CHEBI:77893"/>
    </ligand>
</feature>
<feature type="binding site" evidence="1">
    <location>
        <position position="242"/>
    </location>
    <ligand>
        <name>Fe(3+)</name>
        <dbReference type="ChEBI" id="CHEBI:29034"/>
    </ligand>
</feature>
<feature type="binding site" evidence="1">
    <location>
        <position position="242"/>
    </location>
    <ligand>
        <name>Zn(2+)</name>
        <dbReference type="ChEBI" id="CHEBI:29105"/>
    </ligand>
</feature>
<feature type="binding site" evidence="1">
    <location>
        <position position="245"/>
    </location>
    <ligand>
        <name>4-imidazolone-5-propanoate</name>
        <dbReference type="ChEBI" id="CHEBI:77893"/>
    </ligand>
</feature>
<feature type="binding site" evidence="1">
    <location>
        <position position="317"/>
    </location>
    <ligand>
        <name>Fe(3+)</name>
        <dbReference type="ChEBI" id="CHEBI:29034"/>
    </ligand>
</feature>
<feature type="binding site" evidence="1">
    <location>
        <position position="317"/>
    </location>
    <ligand>
        <name>Zn(2+)</name>
        <dbReference type="ChEBI" id="CHEBI:29105"/>
    </ligand>
</feature>
<feature type="binding site" evidence="1">
    <location>
        <position position="319"/>
    </location>
    <ligand>
        <name>N-formimidoyl-L-glutamate</name>
        <dbReference type="ChEBI" id="CHEBI:58928"/>
    </ligand>
</feature>
<feature type="binding site" evidence="1">
    <location>
        <position position="321"/>
    </location>
    <ligand>
        <name>N-formimidoyl-L-glutamate</name>
        <dbReference type="ChEBI" id="CHEBI:58928"/>
    </ligand>
</feature>
<feature type="binding site" evidence="1">
    <location>
        <position position="322"/>
    </location>
    <ligand>
        <name>4-imidazolone-5-propanoate</name>
        <dbReference type="ChEBI" id="CHEBI:77893"/>
    </ligand>
</feature>